<proteinExistence type="evidence at transcript level"/>
<organism>
    <name type="scientific">Bos taurus</name>
    <name type="common">Bovine</name>
    <dbReference type="NCBI Taxonomy" id="9913"/>
    <lineage>
        <taxon>Eukaryota</taxon>
        <taxon>Metazoa</taxon>
        <taxon>Chordata</taxon>
        <taxon>Craniata</taxon>
        <taxon>Vertebrata</taxon>
        <taxon>Euteleostomi</taxon>
        <taxon>Mammalia</taxon>
        <taxon>Eutheria</taxon>
        <taxon>Laurasiatheria</taxon>
        <taxon>Artiodactyla</taxon>
        <taxon>Ruminantia</taxon>
        <taxon>Pecora</taxon>
        <taxon>Bovidae</taxon>
        <taxon>Bovinae</taxon>
        <taxon>Bos</taxon>
    </lineage>
</organism>
<evidence type="ECO:0000250" key="1">
    <source>
        <dbReference type="UniProtKB" id="Q19267"/>
    </source>
</evidence>
<evidence type="ECO:0000250" key="2">
    <source>
        <dbReference type="UniProtKB" id="Q91XD7"/>
    </source>
</evidence>
<evidence type="ECO:0000250" key="3">
    <source>
        <dbReference type="UniProtKB" id="Q9CYA0"/>
    </source>
</evidence>
<evidence type="ECO:0000255" key="4"/>
<evidence type="ECO:0000255" key="5">
    <source>
        <dbReference type="PROSITE-ProRule" id="PRU00076"/>
    </source>
</evidence>
<evidence type="ECO:0000305" key="6"/>
<keyword id="KW-0106">Calcium</keyword>
<keyword id="KW-1015">Disulfide bond</keyword>
<keyword id="KW-0245">EGF-like domain</keyword>
<keyword id="KW-0325">Glycoprotein</keyword>
<keyword id="KW-0413">Isomerase</keyword>
<keyword id="KW-0472">Membrane</keyword>
<keyword id="KW-0676">Redox-active center</keyword>
<keyword id="KW-1185">Reference proteome</keyword>
<keyword id="KW-0677">Repeat</keyword>
<keyword id="KW-0732">Signal</keyword>
<keyword id="KW-0812">Transmembrane</keyword>
<keyword id="KW-1133">Transmembrane helix</keyword>
<gene>
    <name type="primary">CRELD1</name>
</gene>
<comment type="function">
    <text evidence="2 3">Protein disulfide isomerase (By similarity). Promotes the localization of acetylcholine receptors (AChRs) to the plasma membrane (By similarity).</text>
</comment>
<comment type="catalytic activity">
    <reaction evidence="3">
        <text>Catalyzes the rearrangement of -S-S- bonds in proteins.</text>
        <dbReference type="EC" id="5.3.4.1"/>
    </reaction>
</comment>
<comment type="subcellular location">
    <subcellularLocation>
        <location evidence="6">Membrane</location>
        <topology evidence="6">Multi-pass membrane protein</topology>
    </subcellularLocation>
</comment>
<comment type="similarity">
    <text evidence="6">Belongs to the CRELD family.</text>
</comment>
<comment type="sequence caution" evidence="6">
    <conflict type="frameshift">
        <sequence resource="EMBL-CDS" id="AAX46723"/>
    </conflict>
</comment>
<feature type="signal peptide" evidence="4">
    <location>
        <begin position="1"/>
        <end position="29"/>
    </location>
</feature>
<feature type="chain" id="PRO_0000042780" description="Protein disulfide isomerase CRELD1">
    <location>
        <begin position="30"/>
        <end position="420"/>
    </location>
</feature>
<feature type="topological domain" description="Extracellular" evidence="4">
    <location>
        <begin position="30"/>
        <end position="362"/>
    </location>
</feature>
<feature type="transmembrane region" description="Helical" evidence="4">
    <location>
        <begin position="363"/>
        <end position="383"/>
    </location>
</feature>
<feature type="topological domain" description="Cytoplasmic" evidence="4">
    <location>
        <position position="384"/>
    </location>
</feature>
<feature type="transmembrane region" description="Helical" evidence="4">
    <location>
        <begin position="385"/>
        <end position="405"/>
    </location>
</feature>
<feature type="topological domain" description="Extracellular" evidence="4">
    <location>
        <begin position="406"/>
        <end position="420"/>
    </location>
</feature>
<feature type="domain" description="EGF-like 1" evidence="5">
    <location>
        <begin position="153"/>
        <end position="193"/>
    </location>
</feature>
<feature type="repeat" description="FU 1">
    <location>
        <begin position="208"/>
        <end position="255"/>
    </location>
</feature>
<feature type="repeat" description="FU 2">
    <location>
        <begin position="268"/>
        <end position="315"/>
    </location>
</feature>
<feature type="domain" description="EGF-like 2; calcium-binding" evidence="5">
    <location>
        <begin position="305"/>
        <end position="344"/>
    </location>
</feature>
<feature type="short sequence motif" description="CXXC" evidence="1">
    <location>
        <begin position="46"/>
        <end position="49"/>
    </location>
</feature>
<feature type="short sequence motif" description="CXXC" evidence="3">
    <location>
        <begin position="278"/>
        <end position="281"/>
    </location>
</feature>
<feature type="glycosylation site" description="N-linked (GlcNAc...) asparagine" evidence="4">
    <location>
        <position position="205"/>
    </location>
</feature>
<feature type="disulfide bond" description="Redox-active" evidence="3">
    <location>
        <begin position="46"/>
        <end position="49"/>
    </location>
</feature>
<feature type="disulfide bond" evidence="5">
    <location>
        <begin position="155"/>
        <end position="169"/>
    </location>
</feature>
<feature type="disulfide bond" evidence="5">
    <location>
        <begin position="163"/>
        <end position="181"/>
    </location>
</feature>
<feature type="disulfide bond" evidence="5">
    <location>
        <begin position="183"/>
        <end position="192"/>
    </location>
</feature>
<feature type="disulfide bond" description="Redox-active" evidence="3">
    <location>
        <begin position="278"/>
        <end position="281"/>
    </location>
</feature>
<feature type="disulfide bond" evidence="5">
    <location>
        <begin position="309"/>
        <end position="321"/>
    </location>
</feature>
<feature type="disulfide bond" evidence="5">
    <location>
        <begin position="314"/>
        <end position="330"/>
    </location>
</feature>
<feature type="disulfide bond" evidence="5">
    <location>
        <begin position="332"/>
        <end position="343"/>
    </location>
</feature>
<feature type="sequence conflict" description="In Ref. 1; AAX46723." evidence="6" ref="1">
    <original>D</original>
    <variation>E</variation>
    <location>
        <position position="346"/>
    </location>
</feature>
<protein>
    <recommendedName>
        <fullName evidence="6">Protein disulfide isomerase CRELD1</fullName>
        <ecNumber evidence="3">5.3.4.1</ecNumber>
    </recommendedName>
    <alternativeName>
        <fullName>Cysteine-rich with EGF-like domain protein 1</fullName>
    </alternativeName>
</protein>
<reference key="1">
    <citation type="journal article" date="2005" name="BMC Genomics">
        <title>Characterization of 954 bovine full-CDS cDNA sequences.</title>
        <authorList>
            <person name="Harhay G.P."/>
            <person name="Sonstegard T.S."/>
            <person name="Keele J.W."/>
            <person name="Heaton M.P."/>
            <person name="Clawson M.L."/>
            <person name="Snelling W.M."/>
            <person name="Wiedmann R.T."/>
            <person name="Van Tassell C.P."/>
            <person name="Smith T.P.L."/>
        </authorList>
    </citation>
    <scope>NUCLEOTIDE SEQUENCE [LARGE SCALE MRNA]</scope>
</reference>
<accession>Q5EA46</accession>
<accession>Q58CS1</accession>
<name>CREL1_BOVIN</name>
<sequence length="420" mass="45368">MAPRSSRGIAPAMLCGLSLFLGFPGLVWVQISVPPQSSPHTEPHPCHTCRGLVDSFNKGLERTIRDNFGGGNTAWEEEKLSKYKDSETRLVEVLEGVCSKSDFECHRLLELSEELVESWWFHKQQEAPDLFQWLCSDSLKLCCPSGTFGPSCLPCPGGAERPCGGYGHCEGEGTRGGSGHCDCQAGYGGEACGQCGLGYFEAERNASHLVCSACFGPCARCSGPEESHCLQCKKGWALHHLKCVDIDECGTERASCGADQFCVNTEGSYECRDCAKACLGCMGAGPGRCKKCSPGYQQVGSKCLDVDECETAVCPGENQQCENTEGSYRCICADGYKQMEGICVKDQIPESAGFFSEMTEDELVVLQQMFFGVIICALATLAAKGDLVFTAIFIGAVAAMTGYWLSERSDRVLEGFIKGR</sequence>
<dbReference type="EC" id="5.3.4.1" evidence="3"/>
<dbReference type="EMBL" id="BT020723">
    <property type="protein sequence ID" value="AAX08740.1"/>
    <property type="molecule type" value="mRNA"/>
</dbReference>
<dbReference type="EMBL" id="BT021876">
    <property type="protein sequence ID" value="AAX46723.1"/>
    <property type="status" value="ALT_FRAME"/>
    <property type="molecule type" value="mRNA"/>
</dbReference>
<dbReference type="RefSeq" id="NP_001014851.3">
    <property type="nucleotide sequence ID" value="NM_001014851.3"/>
</dbReference>
<dbReference type="FunCoup" id="Q5EA46">
    <property type="interactions" value="1520"/>
</dbReference>
<dbReference type="STRING" id="9913.ENSBTAP00000014377"/>
<dbReference type="GlyCosmos" id="Q5EA46">
    <property type="glycosylation" value="1 site, No reported glycans"/>
</dbReference>
<dbReference type="GlyGen" id="Q5EA46">
    <property type="glycosylation" value="1 site"/>
</dbReference>
<dbReference type="SwissPalm" id="Q5EA46"/>
<dbReference type="PaxDb" id="9913-ENSBTAP00000014377"/>
<dbReference type="GeneID" id="504854"/>
<dbReference type="KEGG" id="bta:504854"/>
<dbReference type="CTD" id="78987"/>
<dbReference type="eggNOG" id="KOG4260">
    <property type="taxonomic scope" value="Eukaryota"/>
</dbReference>
<dbReference type="InParanoid" id="Q5EA46"/>
<dbReference type="OrthoDB" id="10045365at2759"/>
<dbReference type="Proteomes" id="UP000009136">
    <property type="component" value="Unplaced"/>
</dbReference>
<dbReference type="GO" id="GO:0016020">
    <property type="term" value="C:membrane"/>
    <property type="evidence" value="ECO:0007669"/>
    <property type="project" value="UniProtKB-SubCell"/>
</dbReference>
<dbReference type="GO" id="GO:0005509">
    <property type="term" value="F:calcium ion binding"/>
    <property type="evidence" value="ECO:0007669"/>
    <property type="project" value="InterPro"/>
</dbReference>
<dbReference type="GO" id="GO:0003756">
    <property type="term" value="F:protein disulfide isomerase activity"/>
    <property type="evidence" value="ECO:0007669"/>
    <property type="project" value="UniProtKB-EC"/>
</dbReference>
<dbReference type="CDD" id="cd00054">
    <property type="entry name" value="EGF_CA"/>
    <property type="match status" value="1"/>
</dbReference>
<dbReference type="CDD" id="cd00064">
    <property type="entry name" value="FU"/>
    <property type="match status" value="1"/>
</dbReference>
<dbReference type="Gene3D" id="2.10.25.10">
    <property type="entry name" value="Laminin"/>
    <property type="match status" value="2"/>
</dbReference>
<dbReference type="InterPro" id="IPR021852">
    <property type="entry name" value="DUF3456"/>
</dbReference>
<dbReference type="InterPro" id="IPR050751">
    <property type="entry name" value="ECM_structural_protein"/>
</dbReference>
<dbReference type="InterPro" id="IPR001881">
    <property type="entry name" value="EGF-like_Ca-bd_dom"/>
</dbReference>
<dbReference type="InterPro" id="IPR000742">
    <property type="entry name" value="EGF-like_dom"/>
</dbReference>
<dbReference type="InterPro" id="IPR000152">
    <property type="entry name" value="EGF-type_Asp/Asn_hydroxyl_site"/>
</dbReference>
<dbReference type="InterPro" id="IPR018097">
    <property type="entry name" value="EGF_Ca-bd_CS"/>
</dbReference>
<dbReference type="InterPro" id="IPR006212">
    <property type="entry name" value="Furin_repeat"/>
</dbReference>
<dbReference type="InterPro" id="IPR009030">
    <property type="entry name" value="Growth_fac_rcpt_cys_sf"/>
</dbReference>
<dbReference type="InterPro" id="IPR002049">
    <property type="entry name" value="LE_dom"/>
</dbReference>
<dbReference type="InterPro" id="IPR049883">
    <property type="entry name" value="NOTCH1_EGF-like"/>
</dbReference>
<dbReference type="PANTHER" id="PTHR24034">
    <property type="entry name" value="EGF-LIKE DOMAIN-CONTAINING PROTEIN"/>
    <property type="match status" value="1"/>
</dbReference>
<dbReference type="PANTHER" id="PTHR24034:SF209">
    <property type="entry name" value="EGF-LIKE DOMAIN-CONTAINING PROTEIN"/>
    <property type="match status" value="1"/>
</dbReference>
<dbReference type="Pfam" id="PF11938">
    <property type="entry name" value="DUF3456"/>
    <property type="match status" value="2"/>
</dbReference>
<dbReference type="Pfam" id="PF07645">
    <property type="entry name" value="EGF_CA"/>
    <property type="match status" value="2"/>
</dbReference>
<dbReference type="SMART" id="SM00181">
    <property type="entry name" value="EGF"/>
    <property type="match status" value="4"/>
</dbReference>
<dbReference type="SMART" id="SM00179">
    <property type="entry name" value="EGF_CA"/>
    <property type="match status" value="2"/>
</dbReference>
<dbReference type="SMART" id="SM00261">
    <property type="entry name" value="FU"/>
    <property type="match status" value="2"/>
</dbReference>
<dbReference type="SUPFAM" id="SSF57184">
    <property type="entry name" value="Growth factor receptor domain"/>
    <property type="match status" value="1"/>
</dbReference>
<dbReference type="PROSITE" id="PS00010">
    <property type="entry name" value="ASX_HYDROXYL"/>
    <property type="match status" value="1"/>
</dbReference>
<dbReference type="PROSITE" id="PS00022">
    <property type="entry name" value="EGF_1"/>
    <property type="match status" value="1"/>
</dbReference>
<dbReference type="PROSITE" id="PS01186">
    <property type="entry name" value="EGF_2"/>
    <property type="match status" value="2"/>
</dbReference>
<dbReference type="PROSITE" id="PS50026">
    <property type="entry name" value="EGF_3"/>
    <property type="match status" value="2"/>
</dbReference>
<dbReference type="PROSITE" id="PS01187">
    <property type="entry name" value="EGF_CA"/>
    <property type="match status" value="2"/>
</dbReference>